<feature type="chain" id="PRO_0000068928" description="5-hydroxytryptamine receptor 1D">
    <location>
        <begin position="1"/>
        <end position="374"/>
    </location>
</feature>
<feature type="topological domain" description="Extracellular" evidence="1">
    <location>
        <begin position="1"/>
        <end position="35"/>
    </location>
</feature>
<feature type="transmembrane region" description="Helical; Name=1" evidence="1">
    <location>
        <begin position="36"/>
        <end position="61"/>
    </location>
</feature>
<feature type="topological domain" description="Cytoplasmic" evidence="1">
    <location>
        <begin position="62"/>
        <end position="72"/>
    </location>
</feature>
<feature type="transmembrane region" description="Helical; Name=2" evidence="1">
    <location>
        <begin position="73"/>
        <end position="94"/>
    </location>
</feature>
<feature type="topological domain" description="Extracellular" evidence="1">
    <location>
        <begin position="95"/>
        <end position="106"/>
    </location>
</feature>
<feature type="transmembrane region" description="Helical; Name=3" evidence="1">
    <location>
        <begin position="107"/>
        <end position="131"/>
    </location>
</feature>
<feature type="topological domain" description="Cytoplasmic" evidence="1">
    <location>
        <begin position="132"/>
        <end position="151"/>
    </location>
</feature>
<feature type="transmembrane region" description="Helical; Name=4" evidence="1">
    <location>
        <begin position="152"/>
        <end position="173"/>
    </location>
</feature>
<feature type="topological domain" description="Extracellular" evidence="1">
    <location>
        <begin position="174"/>
        <end position="191"/>
    </location>
</feature>
<feature type="transmembrane region" description="Helical; Name=5" evidence="1">
    <location>
        <begin position="192"/>
        <end position="215"/>
    </location>
</feature>
<feature type="topological domain" description="Cytoplasmic" evidence="1">
    <location>
        <begin position="216"/>
        <end position="297"/>
    </location>
</feature>
<feature type="transmembrane region" description="Helical; Name=6" evidence="1">
    <location>
        <begin position="298"/>
        <end position="323"/>
    </location>
</feature>
<feature type="topological domain" description="Extracellular" evidence="1">
    <location>
        <begin position="324"/>
        <end position="332"/>
    </location>
</feature>
<feature type="transmembrane region" description="Helical; Name=7" evidence="1">
    <location>
        <begin position="333"/>
        <end position="356"/>
    </location>
</feature>
<feature type="topological domain" description="Cytoplasmic" evidence="1">
    <location>
        <begin position="357"/>
        <end position="374"/>
    </location>
</feature>
<feature type="short sequence motif" description="DRY motif; important for ligand-induced conformation changes" evidence="2">
    <location>
        <begin position="132"/>
        <end position="134"/>
    </location>
</feature>
<feature type="short sequence motif" description="NPxxY motif; important for ligand-induced conformation changes and signaling" evidence="2">
    <location>
        <begin position="349"/>
        <end position="353"/>
    </location>
</feature>
<feature type="binding site" evidence="1">
    <location>
        <position position="115"/>
    </location>
    <ligand>
        <name>serotonin</name>
        <dbReference type="ChEBI" id="CHEBI:350546"/>
    </ligand>
</feature>
<feature type="binding site" evidence="1">
    <location>
        <position position="119"/>
    </location>
    <ligand>
        <name>serotonin</name>
        <dbReference type="ChEBI" id="CHEBI:350546"/>
    </ligand>
</feature>
<feature type="binding site" evidence="1">
    <location>
        <position position="318"/>
    </location>
    <ligand>
        <name>serotonin</name>
        <dbReference type="ChEBI" id="CHEBI:350546"/>
    </ligand>
</feature>
<feature type="glycosylation site" description="N-linked (GlcNAc...) asparagine" evidence="3">
    <location>
        <position position="5"/>
    </location>
</feature>
<feature type="glycosylation site" description="N-linked (GlcNAc...) asparagine" evidence="3">
    <location>
        <position position="17"/>
    </location>
</feature>
<feature type="glycosylation site" description="N-linked (GlcNAc...) asparagine" evidence="3">
    <location>
        <position position="21"/>
    </location>
</feature>
<feature type="disulfide bond" evidence="4">
    <location>
        <begin position="108"/>
        <end position="185"/>
    </location>
</feature>
<feature type="sequence conflict" description="In Ref. 1; CAA64395." evidence="6" ref="1">
    <original>P</original>
    <variation>L</variation>
    <location>
        <position position="3"/>
    </location>
</feature>
<feature type="sequence conflict" description="In Ref. 1; CAA64395, 4; EDL29938/EDL29939 and 5; AAI03533/AAI03536/AAI03537." evidence="6" ref="1 4 5">
    <original>V</original>
    <variation>A</variation>
    <location>
        <position position="22"/>
    </location>
</feature>
<feature type="sequence conflict" description="In Ref. 1; CAA64395." evidence="6" ref="1">
    <original>I</original>
    <variation>A</variation>
    <location>
        <position position="373"/>
    </location>
</feature>
<keyword id="KW-1003">Cell membrane</keyword>
<keyword id="KW-1015">Disulfide bond</keyword>
<keyword id="KW-0297">G-protein coupled receptor</keyword>
<keyword id="KW-0325">Glycoprotein</keyword>
<keyword id="KW-0472">Membrane</keyword>
<keyword id="KW-0675">Receptor</keyword>
<keyword id="KW-1185">Reference proteome</keyword>
<keyword id="KW-0807">Transducer</keyword>
<keyword id="KW-0812">Transmembrane</keyword>
<keyword id="KW-1133">Transmembrane helix</keyword>
<protein>
    <recommendedName>
        <fullName>5-hydroxytryptamine receptor 1D</fullName>
        <shortName>5-HT-1D</shortName>
        <shortName>5-HT1D</shortName>
    </recommendedName>
    <alternativeName>
        <fullName>Serotonin receptor 1D</fullName>
    </alternativeName>
</protein>
<comment type="function">
    <text evidence="1">G-protein coupled receptor for 5-hydroxytryptamine (serotonin). Also functions as a receptor for ergot alkaloid derivatives, various anxiolytic and antidepressant drugs and other psychoactive substances. Ligand binding causes a conformation change that triggers signaling via guanine nucleotide-binding proteins (G proteins) and modulates the activity of downstream effectors, such as adenylate cyclase. HTR1D is coupled to G(i)/G(o) G alpha proteins and mediates inhibitory neurotransmission by inhibiting adenylate cyclase activity. Regulates the release of 5-hydroxytryptamine in the brain, and thereby affects neural activity. May also play a role in regulating the release of other neurotransmitters. May play a role in vasoconstriction.</text>
</comment>
<comment type="subunit">
    <text evidence="1">Homodimer. Heterodimer with HTR1B.</text>
</comment>
<comment type="subcellular location">
    <subcellularLocation>
        <location evidence="1">Cell membrane</location>
        <topology evidence="1">Multi-pass membrane protein</topology>
    </subcellularLocation>
</comment>
<comment type="tissue specificity">
    <text evidence="5">Detected in the motor column in spinal cord, and in several cranial motor nuclei, including nucleus ambiguous, oculomotoris, trochelaris and abducens. Detected in gamma motor neurons in the lumbar spinal cord. Detected in proprioceptive sensory neurons in dorsal root ganglia.</text>
</comment>
<comment type="disruption phenotype">
    <text evidence="5">No visible phenotype. Depending on the task, mutant mice show improved motor coordination, especially in avoiding hind limb slips when crossing a narrow beam and in climbing onto a horizontal hanging wire.</text>
</comment>
<comment type="similarity">
    <text evidence="4">Belongs to the G-protein coupled receptor 1 family.</text>
</comment>
<proteinExistence type="evidence at transcript level"/>
<organism>
    <name type="scientific">Mus musculus</name>
    <name type="common">Mouse</name>
    <dbReference type="NCBI Taxonomy" id="10090"/>
    <lineage>
        <taxon>Eukaryota</taxon>
        <taxon>Metazoa</taxon>
        <taxon>Chordata</taxon>
        <taxon>Craniata</taxon>
        <taxon>Vertebrata</taxon>
        <taxon>Euteleostomi</taxon>
        <taxon>Mammalia</taxon>
        <taxon>Eutheria</taxon>
        <taxon>Euarchontoglires</taxon>
        <taxon>Glires</taxon>
        <taxon>Rodentia</taxon>
        <taxon>Myomorpha</taxon>
        <taxon>Muroidea</taxon>
        <taxon>Muridae</taxon>
        <taxon>Murinae</taxon>
        <taxon>Mus</taxon>
        <taxon>Mus</taxon>
    </lineage>
</organism>
<accession>Q61224</accession>
<accession>Q3ZB48</accession>
<accession>Q61615</accession>
<accession>Q8BUW7</accession>
<reference key="1">
    <citation type="journal article" date="1997" name="J. Neurochem.">
        <title>Sequence and functional analysis of cloned guinea pig and rat serotonin 5-HT1D receptors: common pharmacological features within the 5-HT1D receptor subfamily.</title>
        <authorList>
            <person name="Wurch T."/>
            <person name="Palmier C."/>
            <person name="Colpaert F.C."/>
            <person name="Pauwels P.J."/>
        </authorList>
    </citation>
    <scope>NUCLEOTIDE SEQUENCE [GENOMIC DNA]</scope>
    <source>
        <strain>NMRI</strain>
        <tissue>Brain</tissue>
    </source>
</reference>
<reference key="2">
    <citation type="journal article" date="2005" name="Science">
        <title>The transcriptional landscape of the mammalian genome.</title>
        <authorList>
            <person name="Carninci P."/>
            <person name="Kasukawa T."/>
            <person name="Katayama S."/>
            <person name="Gough J."/>
            <person name="Frith M.C."/>
            <person name="Maeda N."/>
            <person name="Oyama R."/>
            <person name="Ravasi T."/>
            <person name="Lenhard B."/>
            <person name="Wells C."/>
            <person name="Kodzius R."/>
            <person name="Shimokawa K."/>
            <person name="Bajic V.B."/>
            <person name="Brenner S.E."/>
            <person name="Batalov S."/>
            <person name="Forrest A.R."/>
            <person name="Zavolan M."/>
            <person name="Davis M.J."/>
            <person name="Wilming L.G."/>
            <person name="Aidinis V."/>
            <person name="Allen J.E."/>
            <person name="Ambesi-Impiombato A."/>
            <person name="Apweiler R."/>
            <person name="Aturaliya R.N."/>
            <person name="Bailey T.L."/>
            <person name="Bansal M."/>
            <person name="Baxter L."/>
            <person name="Beisel K.W."/>
            <person name="Bersano T."/>
            <person name="Bono H."/>
            <person name="Chalk A.M."/>
            <person name="Chiu K.P."/>
            <person name="Choudhary V."/>
            <person name="Christoffels A."/>
            <person name="Clutterbuck D.R."/>
            <person name="Crowe M.L."/>
            <person name="Dalla E."/>
            <person name="Dalrymple B.P."/>
            <person name="de Bono B."/>
            <person name="Della Gatta G."/>
            <person name="di Bernardo D."/>
            <person name="Down T."/>
            <person name="Engstrom P."/>
            <person name="Fagiolini M."/>
            <person name="Faulkner G."/>
            <person name="Fletcher C.F."/>
            <person name="Fukushima T."/>
            <person name="Furuno M."/>
            <person name="Futaki S."/>
            <person name="Gariboldi M."/>
            <person name="Georgii-Hemming P."/>
            <person name="Gingeras T.R."/>
            <person name="Gojobori T."/>
            <person name="Green R.E."/>
            <person name="Gustincich S."/>
            <person name="Harbers M."/>
            <person name="Hayashi Y."/>
            <person name="Hensch T.K."/>
            <person name="Hirokawa N."/>
            <person name="Hill D."/>
            <person name="Huminiecki L."/>
            <person name="Iacono M."/>
            <person name="Ikeo K."/>
            <person name="Iwama A."/>
            <person name="Ishikawa T."/>
            <person name="Jakt M."/>
            <person name="Kanapin A."/>
            <person name="Katoh M."/>
            <person name="Kawasawa Y."/>
            <person name="Kelso J."/>
            <person name="Kitamura H."/>
            <person name="Kitano H."/>
            <person name="Kollias G."/>
            <person name="Krishnan S.P."/>
            <person name="Kruger A."/>
            <person name="Kummerfeld S.K."/>
            <person name="Kurochkin I.V."/>
            <person name="Lareau L.F."/>
            <person name="Lazarevic D."/>
            <person name="Lipovich L."/>
            <person name="Liu J."/>
            <person name="Liuni S."/>
            <person name="McWilliam S."/>
            <person name="Madan Babu M."/>
            <person name="Madera M."/>
            <person name="Marchionni L."/>
            <person name="Matsuda H."/>
            <person name="Matsuzawa S."/>
            <person name="Miki H."/>
            <person name="Mignone F."/>
            <person name="Miyake S."/>
            <person name="Morris K."/>
            <person name="Mottagui-Tabar S."/>
            <person name="Mulder N."/>
            <person name="Nakano N."/>
            <person name="Nakauchi H."/>
            <person name="Ng P."/>
            <person name="Nilsson R."/>
            <person name="Nishiguchi S."/>
            <person name="Nishikawa S."/>
            <person name="Nori F."/>
            <person name="Ohara O."/>
            <person name="Okazaki Y."/>
            <person name="Orlando V."/>
            <person name="Pang K.C."/>
            <person name="Pavan W.J."/>
            <person name="Pavesi G."/>
            <person name="Pesole G."/>
            <person name="Petrovsky N."/>
            <person name="Piazza S."/>
            <person name="Reed J."/>
            <person name="Reid J.F."/>
            <person name="Ring B.Z."/>
            <person name="Ringwald M."/>
            <person name="Rost B."/>
            <person name="Ruan Y."/>
            <person name="Salzberg S.L."/>
            <person name="Sandelin A."/>
            <person name="Schneider C."/>
            <person name="Schoenbach C."/>
            <person name="Sekiguchi K."/>
            <person name="Semple C.A."/>
            <person name="Seno S."/>
            <person name="Sessa L."/>
            <person name="Sheng Y."/>
            <person name="Shibata Y."/>
            <person name="Shimada H."/>
            <person name="Shimada K."/>
            <person name="Silva D."/>
            <person name="Sinclair B."/>
            <person name="Sperling S."/>
            <person name="Stupka E."/>
            <person name="Sugiura K."/>
            <person name="Sultana R."/>
            <person name="Takenaka Y."/>
            <person name="Taki K."/>
            <person name="Tammoja K."/>
            <person name="Tan S.L."/>
            <person name="Tang S."/>
            <person name="Taylor M.S."/>
            <person name="Tegner J."/>
            <person name="Teichmann S.A."/>
            <person name="Ueda H.R."/>
            <person name="van Nimwegen E."/>
            <person name="Verardo R."/>
            <person name="Wei C.L."/>
            <person name="Yagi K."/>
            <person name="Yamanishi H."/>
            <person name="Zabarovsky E."/>
            <person name="Zhu S."/>
            <person name="Zimmer A."/>
            <person name="Hide W."/>
            <person name="Bult C."/>
            <person name="Grimmond S.M."/>
            <person name="Teasdale R.D."/>
            <person name="Liu E.T."/>
            <person name="Brusic V."/>
            <person name="Quackenbush J."/>
            <person name="Wahlestedt C."/>
            <person name="Mattick J.S."/>
            <person name="Hume D.A."/>
            <person name="Kai C."/>
            <person name="Sasaki D."/>
            <person name="Tomaru Y."/>
            <person name="Fukuda S."/>
            <person name="Kanamori-Katayama M."/>
            <person name="Suzuki M."/>
            <person name="Aoki J."/>
            <person name="Arakawa T."/>
            <person name="Iida J."/>
            <person name="Imamura K."/>
            <person name="Itoh M."/>
            <person name="Kato T."/>
            <person name="Kawaji H."/>
            <person name="Kawagashira N."/>
            <person name="Kawashima T."/>
            <person name="Kojima M."/>
            <person name="Kondo S."/>
            <person name="Konno H."/>
            <person name="Nakano K."/>
            <person name="Ninomiya N."/>
            <person name="Nishio T."/>
            <person name="Okada M."/>
            <person name="Plessy C."/>
            <person name="Shibata K."/>
            <person name="Shiraki T."/>
            <person name="Suzuki S."/>
            <person name="Tagami M."/>
            <person name="Waki K."/>
            <person name="Watahiki A."/>
            <person name="Okamura-Oho Y."/>
            <person name="Suzuki H."/>
            <person name="Kawai J."/>
            <person name="Hayashizaki Y."/>
        </authorList>
    </citation>
    <scope>NUCLEOTIDE SEQUENCE [LARGE SCALE MRNA]</scope>
    <source>
        <strain>C57BL/6J</strain>
        <tissue>Head</tissue>
    </source>
</reference>
<reference key="3">
    <citation type="journal article" date="2009" name="PLoS Biol.">
        <title>Lineage-specific biology revealed by a finished genome assembly of the mouse.</title>
        <authorList>
            <person name="Church D.M."/>
            <person name="Goodstadt L."/>
            <person name="Hillier L.W."/>
            <person name="Zody M.C."/>
            <person name="Goldstein S."/>
            <person name="She X."/>
            <person name="Bult C.J."/>
            <person name="Agarwala R."/>
            <person name="Cherry J.L."/>
            <person name="DiCuccio M."/>
            <person name="Hlavina W."/>
            <person name="Kapustin Y."/>
            <person name="Meric P."/>
            <person name="Maglott D."/>
            <person name="Birtle Z."/>
            <person name="Marques A.C."/>
            <person name="Graves T."/>
            <person name="Zhou S."/>
            <person name="Teague B."/>
            <person name="Potamousis K."/>
            <person name="Churas C."/>
            <person name="Place M."/>
            <person name="Herschleb J."/>
            <person name="Runnheim R."/>
            <person name="Forrest D."/>
            <person name="Amos-Landgraf J."/>
            <person name="Schwartz D.C."/>
            <person name="Cheng Z."/>
            <person name="Lindblad-Toh K."/>
            <person name="Eichler E.E."/>
            <person name="Ponting C.P."/>
        </authorList>
    </citation>
    <scope>NUCLEOTIDE SEQUENCE [LARGE SCALE GENOMIC DNA]</scope>
    <source>
        <strain>C57BL/6J</strain>
    </source>
</reference>
<reference key="4">
    <citation type="submission" date="2005-07" db="EMBL/GenBank/DDBJ databases">
        <authorList>
            <person name="Mural R.J."/>
            <person name="Adams M.D."/>
            <person name="Myers E.W."/>
            <person name="Smith H.O."/>
            <person name="Venter J.C."/>
        </authorList>
    </citation>
    <scope>NUCLEOTIDE SEQUENCE [LARGE SCALE GENOMIC DNA]</scope>
</reference>
<reference key="5">
    <citation type="journal article" date="2004" name="Genome Res.">
        <title>The status, quality, and expansion of the NIH full-length cDNA project: the Mammalian Gene Collection (MGC).</title>
        <authorList>
            <consortium name="The MGC Project Team"/>
        </authorList>
    </citation>
    <scope>NUCLEOTIDE SEQUENCE [LARGE SCALE MRNA]</scope>
</reference>
<reference key="6">
    <citation type="journal article" date="1993" name="Genomics">
        <title>Identification, chromosomal location, and genome organization of mammalian G-protein-coupled receptors.</title>
        <authorList>
            <person name="Wilkie T.M."/>
            <person name="Chen Y."/>
            <person name="Gilbert D.J."/>
            <person name="Moore K.J."/>
            <person name="Yu L."/>
            <person name="Simon M.I."/>
            <person name="Copeland N.G."/>
            <person name="Jenkins N.A."/>
        </authorList>
    </citation>
    <scope>NUCLEOTIDE SEQUENCE [MRNA] OF 135-306</scope>
    <source>
        <tissue>Testis</tissue>
    </source>
</reference>
<reference key="7">
    <citation type="journal article" date="2012" name="Mol. Cell. Neurosci.">
        <title>Sensorimotor function is modulated by the serotonin receptor 1d, a novel marker for gamma motor neurons.</title>
        <authorList>
            <person name="Enjin A."/>
            <person name="Leao K.E."/>
            <person name="Mikulovic S."/>
            <person name="Le Merre P."/>
            <person name="Tourtellotte W.G."/>
            <person name="Kullander K."/>
        </authorList>
    </citation>
    <scope>DISRUPTION PHENOTYPE</scope>
    <scope>TISSUE SPECIFICITY</scope>
</reference>
<dbReference type="EMBL" id="X94908">
    <property type="protein sequence ID" value="CAA64395.1"/>
    <property type="molecule type" value="Genomic_DNA"/>
</dbReference>
<dbReference type="EMBL" id="AK082016">
    <property type="protein sequence ID" value="BAC38393.1"/>
    <property type="molecule type" value="mRNA"/>
</dbReference>
<dbReference type="EMBL" id="AL670673">
    <property type="status" value="NOT_ANNOTATED_CDS"/>
    <property type="molecule type" value="Genomic_DNA"/>
</dbReference>
<dbReference type="EMBL" id="CH466552">
    <property type="protein sequence ID" value="EDL29938.1"/>
    <property type="molecule type" value="Genomic_DNA"/>
</dbReference>
<dbReference type="EMBL" id="CH466552">
    <property type="protein sequence ID" value="EDL29939.1"/>
    <property type="molecule type" value="Genomic_DNA"/>
</dbReference>
<dbReference type="EMBL" id="BC103532">
    <property type="protein sequence ID" value="AAI03533.1"/>
    <property type="molecule type" value="mRNA"/>
</dbReference>
<dbReference type="EMBL" id="BC103535">
    <property type="protein sequence ID" value="AAI03536.1"/>
    <property type="molecule type" value="mRNA"/>
</dbReference>
<dbReference type="EMBL" id="BC103536">
    <property type="protein sequence ID" value="AAI03537.1"/>
    <property type="molecule type" value="mRNA"/>
</dbReference>
<dbReference type="EMBL" id="L20335">
    <property type="protein sequence ID" value="AAA16847.1"/>
    <property type="molecule type" value="mRNA"/>
</dbReference>
<dbReference type="CCDS" id="CCDS18806.1"/>
<dbReference type="PIR" id="F48909">
    <property type="entry name" value="F48909"/>
</dbReference>
<dbReference type="RefSeq" id="NP_001272411.1">
    <property type="nucleotide sequence ID" value="NM_001285482.1"/>
</dbReference>
<dbReference type="RefSeq" id="NP_001272412.1">
    <property type="nucleotide sequence ID" value="NM_001285483.1"/>
</dbReference>
<dbReference type="RefSeq" id="NP_001272413.1">
    <property type="nucleotide sequence ID" value="NM_001285484.2"/>
</dbReference>
<dbReference type="RefSeq" id="NP_001408035.1">
    <property type="nucleotide sequence ID" value="NM_001421106.1"/>
</dbReference>
<dbReference type="RefSeq" id="NP_001408036.1">
    <property type="nucleotide sequence ID" value="NM_001421107.1"/>
</dbReference>
<dbReference type="RefSeq" id="NP_032335.2">
    <property type="nucleotide sequence ID" value="NM_008309.5"/>
</dbReference>
<dbReference type="RefSeq" id="XP_006538640.1">
    <property type="nucleotide sequence ID" value="XM_006538577.2"/>
</dbReference>
<dbReference type="RefSeq" id="XP_006538641.1">
    <property type="nucleotide sequence ID" value="XM_006538578.2"/>
</dbReference>
<dbReference type="RefSeq" id="XP_017175475.1">
    <property type="nucleotide sequence ID" value="XM_017319986.3"/>
</dbReference>
<dbReference type="SMR" id="Q61224"/>
<dbReference type="FunCoup" id="Q61224">
    <property type="interactions" value="697"/>
</dbReference>
<dbReference type="STRING" id="10090.ENSMUSP00000086052"/>
<dbReference type="BindingDB" id="Q61224"/>
<dbReference type="ChEMBL" id="CHEMBL4297"/>
<dbReference type="GlyCosmos" id="Q61224">
    <property type="glycosylation" value="3 sites, No reported glycans"/>
</dbReference>
<dbReference type="GlyGen" id="Q61224">
    <property type="glycosylation" value="3 sites"/>
</dbReference>
<dbReference type="PhosphoSitePlus" id="Q61224"/>
<dbReference type="PaxDb" id="10090-ENSMUSP00000086052"/>
<dbReference type="DNASU" id="15552"/>
<dbReference type="Ensembl" id="ENSMUST00000088677.5">
    <property type="protein sequence ID" value="ENSMUSP00000086052.5"/>
    <property type="gene ID" value="ENSMUSG00000070687.12"/>
</dbReference>
<dbReference type="Ensembl" id="ENSMUST00000117699.2">
    <property type="protein sequence ID" value="ENSMUSP00000112840.2"/>
    <property type="gene ID" value="ENSMUSG00000070687.12"/>
</dbReference>
<dbReference type="Ensembl" id="ENSMUST00000121571.8">
    <property type="protein sequence ID" value="ENSMUSP00000112402.2"/>
    <property type="gene ID" value="ENSMUSG00000070687.12"/>
</dbReference>
<dbReference type="GeneID" id="15552"/>
<dbReference type="KEGG" id="mmu:15552"/>
<dbReference type="UCSC" id="uc008vic.3">
    <property type="organism name" value="mouse"/>
</dbReference>
<dbReference type="AGR" id="MGI:96276"/>
<dbReference type="CTD" id="3352"/>
<dbReference type="MGI" id="MGI:96276">
    <property type="gene designation" value="Htr1d"/>
</dbReference>
<dbReference type="VEuPathDB" id="HostDB:ENSMUSG00000070687"/>
<dbReference type="eggNOG" id="KOG3656">
    <property type="taxonomic scope" value="Eukaryota"/>
</dbReference>
<dbReference type="GeneTree" id="ENSGT01010000222287"/>
<dbReference type="HOGENOM" id="CLU_009579_11_1_1"/>
<dbReference type="InParanoid" id="Q61224"/>
<dbReference type="OMA" id="VWMISIS"/>
<dbReference type="OrthoDB" id="5956310at2759"/>
<dbReference type="PhylomeDB" id="Q61224"/>
<dbReference type="TreeFam" id="TF316350"/>
<dbReference type="Reactome" id="R-MMU-390666">
    <property type="pathway name" value="Serotonin receptors"/>
</dbReference>
<dbReference type="Reactome" id="R-MMU-418594">
    <property type="pathway name" value="G alpha (i) signalling events"/>
</dbReference>
<dbReference type="BioGRID-ORCS" id="15552">
    <property type="hits" value="4 hits in 80 CRISPR screens"/>
</dbReference>
<dbReference type="PRO" id="PR:Q61224"/>
<dbReference type="Proteomes" id="UP000000589">
    <property type="component" value="Chromosome 4"/>
</dbReference>
<dbReference type="RNAct" id="Q61224">
    <property type="molecule type" value="protein"/>
</dbReference>
<dbReference type="Bgee" id="ENSMUSG00000070687">
    <property type="expression patterns" value="Expressed in paraventricular nucleus of thalamus and 98 other cell types or tissues"/>
</dbReference>
<dbReference type="GO" id="GO:0005886">
    <property type="term" value="C:plasma membrane"/>
    <property type="evidence" value="ECO:0000250"/>
    <property type="project" value="UniProtKB"/>
</dbReference>
<dbReference type="GO" id="GO:0045202">
    <property type="term" value="C:synapse"/>
    <property type="evidence" value="ECO:0007669"/>
    <property type="project" value="GOC"/>
</dbReference>
<dbReference type="GO" id="GO:0004993">
    <property type="term" value="F:G protein-coupled serotonin receptor activity"/>
    <property type="evidence" value="ECO:0000314"/>
    <property type="project" value="MGI"/>
</dbReference>
<dbReference type="GO" id="GO:0051378">
    <property type="term" value="F:serotonin binding"/>
    <property type="evidence" value="ECO:0000314"/>
    <property type="project" value="MGI"/>
</dbReference>
<dbReference type="GO" id="GO:0007193">
    <property type="term" value="P:adenylate cyclase-inhibiting G protein-coupled receptor signaling pathway"/>
    <property type="evidence" value="ECO:0000250"/>
    <property type="project" value="UniProtKB"/>
</dbReference>
<dbReference type="GO" id="GO:0007268">
    <property type="term" value="P:chemical synaptic transmission"/>
    <property type="evidence" value="ECO:0007669"/>
    <property type="project" value="InterPro"/>
</dbReference>
<dbReference type="GO" id="GO:0050795">
    <property type="term" value="P:regulation of behavior"/>
    <property type="evidence" value="ECO:0007669"/>
    <property type="project" value="InterPro"/>
</dbReference>
<dbReference type="GO" id="GO:0040012">
    <property type="term" value="P:regulation of locomotion"/>
    <property type="evidence" value="ECO:0007669"/>
    <property type="project" value="InterPro"/>
</dbReference>
<dbReference type="GO" id="GO:0009636">
    <property type="term" value="P:response to toxic substance"/>
    <property type="evidence" value="ECO:0000314"/>
    <property type="project" value="MGI"/>
</dbReference>
<dbReference type="GO" id="GO:0006939">
    <property type="term" value="P:smooth muscle contraction"/>
    <property type="evidence" value="ECO:0007669"/>
    <property type="project" value="InterPro"/>
</dbReference>
<dbReference type="GO" id="GO:0042310">
    <property type="term" value="P:vasoconstriction"/>
    <property type="evidence" value="ECO:0007669"/>
    <property type="project" value="InterPro"/>
</dbReference>
<dbReference type="Gene3D" id="1.20.1070.10">
    <property type="entry name" value="Rhodopsin 7-helix transmembrane proteins"/>
    <property type="match status" value="1"/>
</dbReference>
<dbReference type="InterPro" id="IPR000505">
    <property type="entry name" value="5HT1D_rcpt"/>
</dbReference>
<dbReference type="InterPro" id="IPR002231">
    <property type="entry name" value="5HT_rcpt"/>
</dbReference>
<dbReference type="InterPro" id="IPR000276">
    <property type="entry name" value="GPCR_Rhodpsn"/>
</dbReference>
<dbReference type="InterPro" id="IPR017452">
    <property type="entry name" value="GPCR_Rhodpsn_7TM"/>
</dbReference>
<dbReference type="PANTHER" id="PTHR24248:SF196">
    <property type="entry name" value="5-HYDROXYTRYPTAMINE RECEPTOR 1D"/>
    <property type="match status" value="1"/>
</dbReference>
<dbReference type="PANTHER" id="PTHR24248">
    <property type="entry name" value="ADRENERGIC RECEPTOR-RELATED G-PROTEIN COUPLED RECEPTOR"/>
    <property type="match status" value="1"/>
</dbReference>
<dbReference type="Pfam" id="PF00001">
    <property type="entry name" value="7tm_1"/>
    <property type="match status" value="1"/>
</dbReference>
<dbReference type="PRINTS" id="PR00514">
    <property type="entry name" value="5HT1DRECEPTR"/>
</dbReference>
<dbReference type="PRINTS" id="PR01101">
    <property type="entry name" value="5HTRECEPTOR"/>
</dbReference>
<dbReference type="PRINTS" id="PR00237">
    <property type="entry name" value="GPCRRHODOPSN"/>
</dbReference>
<dbReference type="SMART" id="SM01381">
    <property type="entry name" value="7TM_GPCR_Srsx"/>
    <property type="match status" value="1"/>
</dbReference>
<dbReference type="SUPFAM" id="SSF81321">
    <property type="entry name" value="Family A G protein-coupled receptor-like"/>
    <property type="match status" value="1"/>
</dbReference>
<dbReference type="PROSITE" id="PS00237">
    <property type="entry name" value="G_PROTEIN_RECEP_F1_1"/>
    <property type="match status" value="1"/>
</dbReference>
<dbReference type="PROSITE" id="PS50262">
    <property type="entry name" value="G_PROTEIN_RECEP_F1_2"/>
    <property type="match status" value="1"/>
</dbReference>
<gene>
    <name type="primary">Htr1d</name>
    <name type="synonym">Gpcr14</name>
</gene>
<name>5HT1D_MOUSE</name>
<evidence type="ECO:0000250" key="1">
    <source>
        <dbReference type="UniProtKB" id="P28221"/>
    </source>
</evidence>
<evidence type="ECO:0000250" key="2">
    <source>
        <dbReference type="UniProtKB" id="P41595"/>
    </source>
</evidence>
<evidence type="ECO:0000255" key="3"/>
<evidence type="ECO:0000255" key="4">
    <source>
        <dbReference type="PROSITE-ProRule" id="PRU00521"/>
    </source>
</evidence>
<evidence type="ECO:0000269" key="5">
    <source>
    </source>
</evidence>
<evidence type="ECO:0000305" key="6"/>
<sequence length="374" mass="41594">MSPPNQSLEGLPQEASNRSLNVTGAWDPEVLQALRISLVVVLSVITLATVLSNAFVLTTILLTKKLHTPANYLIGSLATTDLLVSILVMPISIAYTTTRTWNFGQILCDIWVSSDITCCTASILHLCVIALDRYWAITDALEYSKRRTAGHAAAMIAAVWIISICISIPPLFWRQATAHEEMSDCLVNTSQISYTIYSTCGAFYIPSILLIILYGRIYVAARSRILNPPSLYGKRFTTAQLITGSAGSSLCSLNPSLHESHTHTVGSPLFFNQVKIKLADSILERKRISAARERKATKTLGIILGAFIICWLPFFVVSLVLPICRDSCWIHPALFDFFTWLGYLNSLINPVIYTVFNEDFRQAFQKVVHFRKIS</sequence>